<dbReference type="EC" id="3.5.1.18" evidence="1"/>
<dbReference type="EMBL" id="BX950851">
    <property type="protein sequence ID" value="CAG74201.1"/>
    <property type="molecule type" value="Genomic_DNA"/>
</dbReference>
<dbReference type="RefSeq" id="WP_011092879.1">
    <property type="nucleotide sequence ID" value="NC_004547.2"/>
</dbReference>
<dbReference type="SMR" id="Q6D7N4"/>
<dbReference type="STRING" id="218491.ECA1291"/>
<dbReference type="MEROPS" id="M20.010"/>
<dbReference type="GeneID" id="57208101"/>
<dbReference type="KEGG" id="eca:ECA1291"/>
<dbReference type="PATRIC" id="fig|218491.5.peg.1315"/>
<dbReference type="eggNOG" id="COG0624">
    <property type="taxonomic scope" value="Bacteria"/>
</dbReference>
<dbReference type="HOGENOM" id="CLU_021802_4_0_6"/>
<dbReference type="OrthoDB" id="9809784at2"/>
<dbReference type="UniPathway" id="UPA00034">
    <property type="reaction ID" value="UER00021"/>
</dbReference>
<dbReference type="Proteomes" id="UP000007966">
    <property type="component" value="Chromosome"/>
</dbReference>
<dbReference type="GO" id="GO:0008777">
    <property type="term" value="F:acetylornithine deacetylase activity"/>
    <property type="evidence" value="ECO:0007669"/>
    <property type="project" value="TreeGrafter"/>
</dbReference>
<dbReference type="GO" id="GO:0050897">
    <property type="term" value="F:cobalt ion binding"/>
    <property type="evidence" value="ECO:0007669"/>
    <property type="project" value="UniProtKB-UniRule"/>
</dbReference>
<dbReference type="GO" id="GO:0009014">
    <property type="term" value="F:succinyl-diaminopimelate desuccinylase activity"/>
    <property type="evidence" value="ECO:0007669"/>
    <property type="project" value="UniProtKB-UniRule"/>
</dbReference>
<dbReference type="GO" id="GO:0008270">
    <property type="term" value="F:zinc ion binding"/>
    <property type="evidence" value="ECO:0007669"/>
    <property type="project" value="UniProtKB-UniRule"/>
</dbReference>
<dbReference type="GO" id="GO:0019877">
    <property type="term" value="P:diaminopimelate biosynthetic process"/>
    <property type="evidence" value="ECO:0007669"/>
    <property type="project" value="UniProtKB-UniRule"/>
</dbReference>
<dbReference type="GO" id="GO:0006526">
    <property type="term" value="P:L-arginine biosynthetic process"/>
    <property type="evidence" value="ECO:0007669"/>
    <property type="project" value="TreeGrafter"/>
</dbReference>
<dbReference type="GO" id="GO:0009089">
    <property type="term" value="P:lysine biosynthetic process via diaminopimelate"/>
    <property type="evidence" value="ECO:0007669"/>
    <property type="project" value="UniProtKB-UniRule"/>
</dbReference>
<dbReference type="CDD" id="cd03891">
    <property type="entry name" value="M20_DapE_proteobac"/>
    <property type="match status" value="1"/>
</dbReference>
<dbReference type="FunFam" id="3.30.70.360:FF:000011">
    <property type="entry name" value="Succinyl-diaminopimelate desuccinylase"/>
    <property type="match status" value="1"/>
</dbReference>
<dbReference type="FunFam" id="3.40.630.10:FF:000005">
    <property type="entry name" value="Succinyl-diaminopimelate desuccinylase"/>
    <property type="match status" value="1"/>
</dbReference>
<dbReference type="FunFam" id="3.40.630.10:FF:000010">
    <property type="entry name" value="Succinyl-diaminopimelate desuccinylase"/>
    <property type="match status" value="1"/>
</dbReference>
<dbReference type="Gene3D" id="3.40.630.10">
    <property type="entry name" value="Zn peptidases"/>
    <property type="match status" value="2"/>
</dbReference>
<dbReference type="HAMAP" id="MF_01690">
    <property type="entry name" value="DapE"/>
    <property type="match status" value="1"/>
</dbReference>
<dbReference type="InterPro" id="IPR001261">
    <property type="entry name" value="ArgE/DapE_CS"/>
</dbReference>
<dbReference type="InterPro" id="IPR036264">
    <property type="entry name" value="Bact_exopeptidase_dim_dom"/>
</dbReference>
<dbReference type="InterPro" id="IPR005941">
    <property type="entry name" value="DapE_proteobac"/>
</dbReference>
<dbReference type="InterPro" id="IPR002933">
    <property type="entry name" value="Peptidase_M20"/>
</dbReference>
<dbReference type="InterPro" id="IPR011650">
    <property type="entry name" value="Peptidase_M20_dimer"/>
</dbReference>
<dbReference type="InterPro" id="IPR050072">
    <property type="entry name" value="Peptidase_M20A"/>
</dbReference>
<dbReference type="NCBIfam" id="TIGR01246">
    <property type="entry name" value="dapE_proteo"/>
    <property type="match status" value="1"/>
</dbReference>
<dbReference type="NCBIfam" id="NF009557">
    <property type="entry name" value="PRK13009.1"/>
    <property type="match status" value="1"/>
</dbReference>
<dbReference type="PANTHER" id="PTHR43808">
    <property type="entry name" value="ACETYLORNITHINE DEACETYLASE"/>
    <property type="match status" value="1"/>
</dbReference>
<dbReference type="PANTHER" id="PTHR43808:SF31">
    <property type="entry name" value="N-ACETYL-L-CITRULLINE DEACETYLASE"/>
    <property type="match status" value="1"/>
</dbReference>
<dbReference type="Pfam" id="PF07687">
    <property type="entry name" value="M20_dimer"/>
    <property type="match status" value="1"/>
</dbReference>
<dbReference type="Pfam" id="PF01546">
    <property type="entry name" value="Peptidase_M20"/>
    <property type="match status" value="1"/>
</dbReference>
<dbReference type="SUPFAM" id="SSF55031">
    <property type="entry name" value="Bacterial exopeptidase dimerisation domain"/>
    <property type="match status" value="1"/>
</dbReference>
<dbReference type="SUPFAM" id="SSF53187">
    <property type="entry name" value="Zn-dependent exopeptidases"/>
    <property type="match status" value="1"/>
</dbReference>
<dbReference type="PROSITE" id="PS00758">
    <property type="entry name" value="ARGE_DAPE_CPG2_1"/>
    <property type="match status" value="1"/>
</dbReference>
<dbReference type="PROSITE" id="PS00759">
    <property type="entry name" value="ARGE_DAPE_CPG2_2"/>
    <property type="match status" value="1"/>
</dbReference>
<gene>
    <name evidence="1" type="primary">dapE</name>
    <name type="ordered locus">ECA1291</name>
</gene>
<name>DAPE_PECAS</name>
<accession>Q6D7N4</accession>
<sequence length="375" mass="41120">MSCPVIELAQQLIKRPSLSPNDEGCQALMIERLTAIGFTVEAMDFGDTQNFWAWRGTGKTLAFAGHTDVVPSGDESHWQHPPFEPIIRDGMLYGRGAADMKGSLAAMVIAAERFVAAHPNHQGRLAFLITSDEEASAVNGTVKVVDALMARNERLDYCLVGEPSSTHVVGDVVKNGRRGSITANLRIHGMQGHVAYPHLADNPVHRAAPALNELIATEWDRGNDFFPPTTMQIANIQAGTGSNNVIPGELFVQFNFRFSTELTDVLIQQRVAELLDRHQLNYTIDWKLSGQPFLTARGELVDAVVNAVKHYNEVTPELLTNGGTSDGRFIARMGAQVVELGPINATIHKVDECVSAADLQLLSRMYQRIMEQLIA</sequence>
<evidence type="ECO:0000255" key="1">
    <source>
        <dbReference type="HAMAP-Rule" id="MF_01690"/>
    </source>
</evidence>
<feature type="chain" id="PRO_0000375550" description="Succinyl-diaminopimelate desuccinylase">
    <location>
        <begin position="1"/>
        <end position="375"/>
    </location>
</feature>
<feature type="active site" evidence="1">
    <location>
        <position position="68"/>
    </location>
</feature>
<feature type="active site" description="Proton acceptor" evidence="1">
    <location>
        <position position="133"/>
    </location>
</feature>
<feature type="binding site" evidence="1">
    <location>
        <position position="66"/>
    </location>
    <ligand>
        <name>Zn(2+)</name>
        <dbReference type="ChEBI" id="CHEBI:29105"/>
        <label>1</label>
    </ligand>
</feature>
<feature type="binding site" evidence="1">
    <location>
        <position position="99"/>
    </location>
    <ligand>
        <name>Zn(2+)</name>
        <dbReference type="ChEBI" id="CHEBI:29105"/>
        <label>1</label>
    </ligand>
</feature>
<feature type="binding site" evidence="1">
    <location>
        <position position="99"/>
    </location>
    <ligand>
        <name>Zn(2+)</name>
        <dbReference type="ChEBI" id="CHEBI:29105"/>
        <label>2</label>
    </ligand>
</feature>
<feature type="binding site" evidence="1">
    <location>
        <position position="134"/>
    </location>
    <ligand>
        <name>Zn(2+)</name>
        <dbReference type="ChEBI" id="CHEBI:29105"/>
        <label>2</label>
    </ligand>
</feature>
<feature type="binding site" evidence="1">
    <location>
        <position position="162"/>
    </location>
    <ligand>
        <name>Zn(2+)</name>
        <dbReference type="ChEBI" id="CHEBI:29105"/>
        <label>1</label>
    </ligand>
</feature>
<feature type="binding site" evidence="1">
    <location>
        <position position="348"/>
    </location>
    <ligand>
        <name>Zn(2+)</name>
        <dbReference type="ChEBI" id="CHEBI:29105"/>
        <label>2</label>
    </ligand>
</feature>
<keyword id="KW-0028">Amino-acid biosynthesis</keyword>
<keyword id="KW-0170">Cobalt</keyword>
<keyword id="KW-0220">Diaminopimelate biosynthesis</keyword>
<keyword id="KW-0378">Hydrolase</keyword>
<keyword id="KW-0457">Lysine biosynthesis</keyword>
<keyword id="KW-0479">Metal-binding</keyword>
<keyword id="KW-1185">Reference proteome</keyword>
<keyword id="KW-0862">Zinc</keyword>
<reference key="1">
    <citation type="journal article" date="2004" name="Proc. Natl. Acad. Sci. U.S.A.">
        <title>Genome sequence of the enterobacterial phytopathogen Erwinia carotovora subsp. atroseptica and characterization of virulence factors.</title>
        <authorList>
            <person name="Bell K.S."/>
            <person name="Sebaihia M."/>
            <person name="Pritchard L."/>
            <person name="Holden M.T.G."/>
            <person name="Hyman L.J."/>
            <person name="Holeva M.C."/>
            <person name="Thomson N.R."/>
            <person name="Bentley S.D."/>
            <person name="Churcher L.J.C."/>
            <person name="Mungall K."/>
            <person name="Atkin R."/>
            <person name="Bason N."/>
            <person name="Brooks K."/>
            <person name="Chillingworth T."/>
            <person name="Clark K."/>
            <person name="Doggett J."/>
            <person name="Fraser A."/>
            <person name="Hance Z."/>
            <person name="Hauser H."/>
            <person name="Jagels K."/>
            <person name="Moule S."/>
            <person name="Norbertczak H."/>
            <person name="Ormond D."/>
            <person name="Price C."/>
            <person name="Quail M.A."/>
            <person name="Sanders M."/>
            <person name="Walker D."/>
            <person name="Whitehead S."/>
            <person name="Salmond G.P.C."/>
            <person name="Birch P.R.J."/>
            <person name="Parkhill J."/>
            <person name="Toth I.K."/>
        </authorList>
    </citation>
    <scope>NUCLEOTIDE SEQUENCE [LARGE SCALE GENOMIC DNA]</scope>
    <source>
        <strain>SCRI 1043 / ATCC BAA-672</strain>
    </source>
</reference>
<proteinExistence type="inferred from homology"/>
<protein>
    <recommendedName>
        <fullName evidence="1">Succinyl-diaminopimelate desuccinylase</fullName>
        <shortName evidence="1">SDAP desuccinylase</shortName>
        <ecNumber evidence="1">3.5.1.18</ecNumber>
    </recommendedName>
    <alternativeName>
        <fullName evidence="1">N-succinyl-LL-2,6-diaminoheptanedioate amidohydrolase</fullName>
    </alternativeName>
</protein>
<organism>
    <name type="scientific">Pectobacterium atrosepticum (strain SCRI 1043 / ATCC BAA-672)</name>
    <name type="common">Erwinia carotovora subsp. atroseptica</name>
    <dbReference type="NCBI Taxonomy" id="218491"/>
    <lineage>
        <taxon>Bacteria</taxon>
        <taxon>Pseudomonadati</taxon>
        <taxon>Pseudomonadota</taxon>
        <taxon>Gammaproteobacteria</taxon>
        <taxon>Enterobacterales</taxon>
        <taxon>Pectobacteriaceae</taxon>
        <taxon>Pectobacterium</taxon>
    </lineage>
</organism>
<comment type="function">
    <text evidence="1">Catalyzes the hydrolysis of N-succinyl-L,L-diaminopimelic acid (SDAP), forming succinate and LL-2,6-diaminopimelate (DAP), an intermediate involved in the bacterial biosynthesis of lysine and meso-diaminopimelic acid, an essential component of bacterial cell walls.</text>
</comment>
<comment type="catalytic activity">
    <reaction evidence="1">
        <text>N-succinyl-(2S,6S)-2,6-diaminopimelate + H2O = (2S,6S)-2,6-diaminopimelate + succinate</text>
        <dbReference type="Rhea" id="RHEA:22608"/>
        <dbReference type="ChEBI" id="CHEBI:15377"/>
        <dbReference type="ChEBI" id="CHEBI:30031"/>
        <dbReference type="ChEBI" id="CHEBI:57609"/>
        <dbReference type="ChEBI" id="CHEBI:58087"/>
        <dbReference type="EC" id="3.5.1.18"/>
    </reaction>
</comment>
<comment type="cofactor">
    <cofactor evidence="1">
        <name>Zn(2+)</name>
        <dbReference type="ChEBI" id="CHEBI:29105"/>
    </cofactor>
    <cofactor evidence="1">
        <name>Co(2+)</name>
        <dbReference type="ChEBI" id="CHEBI:48828"/>
    </cofactor>
    <text evidence="1">Binds 2 Zn(2+) or Co(2+) ions per subunit.</text>
</comment>
<comment type="pathway">
    <text evidence="1">Amino-acid biosynthesis; L-lysine biosynthesis via DAP pathway; LL-2,6-diaminopimelate from (S)-tetrahydrodipicolinate (succinylase route): step 3/3.</text>
</comment>
<comment type="subunit">
    <text evidence="1">Homodimer.</text>
</comment>
<comment type="similarity">
    <text evidence="1">Belongs to the peptidase M20A family. DapE subfamily.</text>
</comment>